<evidence type="ECO:0000255" key="1">
    <source>
        <dbReference type="HAMAP-Rule" id="MF_00049"/>
    </source>
</evidence>
<proteinExistence type="inferred from homology"/>
<gene>
    <name evidence="1" type="primary">leuS</name>
    <name type="ordered locus">NIS_1464</name>
</gene>
<protein>
    <recommendedName>
        <fullName evidence="1">Leucine--tRNA ligase</fullName>
        <ecNumber evidence="1">6.1.1.4</ecNumber>
    </recommendedName>
    <alternativeName>
        <fullName evidence="1">Leucyl-tRNA synthetase</fullName>
        <shortName evidence="1">LeuRS</shortName>
    </alternativeName>
</protein>
<accession>A6Q512</accession>
<dbReference type="EC" id="6.1.1.4" evidence="1"/>
<dbReference type="EMBL" id="AP009178">
    <property type="protein sequence ID" value="BAF70571.1"/>
    <property type="molecule type" value="Genomic_DNA"/>
</dbReference>
<dbReference type="RefSeq" id="WP_012082834.1">
    <property type="nucleotide sequence ID" value="NC_009662.1"/>
</dbReference>
<dbReference type="SMR" id="A6Q512"/>
<dbReference type="FunCoup" id="A6Q512">
    <property type="interactions" value="485"/>
</dbReference>
<dbReference type="STRING" id="387092.NIS_1464"/>
<dbReference type="KEGG" id="nis:NIS_1464"/>
<dbReference type="eggNOG" id="COG0495">
    <property type="taxonomic scope" value="Bacteria"/>
</dbReference>
<dbReference type="HOGENOM" id="CLU_004427_0_0_7"/>
<dbReference type="InParanoid" id="A6Q512"/>
<dbReference type="OrthoDB" id="9810365at2"/>
<dbReference type="Proteomes" id="UP000001118">
    <property type="component" value="Chromosome"/>
</dbReference>
<dbReference type="GO" id="GO:0005829">
    <property type="term" value="C:cytosol"/>
    <property type="evidence" value="ECO:0007669"/>
    <property type="project" value="TreeGrafter"/>
</dbReference>
<dbReference type="GO" id="GO:0002161">
    <property type="term" value="F:aminoacyl-tRNA deacylase activity"/>
    <property type="evidence" value="ECO:0007669"/>
    <property type="project" value="InterPro"/>
</dbReference>
<dbReference type="GO" id="GO:0005524">
    <property type="term" value="F:ATP binding"/>
    <property type="evidence" value="ECO:0007669"/>
    <property type="project" value="UniProtKB-UniRule"/>
</dbReference>
<dbReference type="GO" id="GO:0004823">
    <property type="term" value="F:leucine-tRNA ligase activity"/>
    <property type="evidence" value="ECO:0007669"/>
    <property type="project" value="UniProtKB-UniRule"/>
</dbReference>
<dbReference type="GO" id="GO:0006429">
    <property type="term" value="P:leucyl-tRNA aminoacylation"/>
    <property type="evidence" value="ECO:0007669"/>
    <property type="project" value="UniProtKB-UniRule"/>
</dbReference>
<dbReference type="CDD" id="cd00812">
    <property type="entry name" value="LeuRS_core"/>
    <property type="match status" value="1"/>
</dbReference>
<dbReference type="FunFam" id="1.10.730.10:FF:000002">
    <property type="entry name" value="Leucine--tRNA ligase"/>
    <property type="match status" value="1"/>
</dbReference>
<dbReference type="FunFam" id="3.10.20.590:FF:000001">
    <property type="entry name" value="Leucine--tRNA ligase"/>
    <property type="match status" value="1"/>
</dbReference>
<dbReference type="FunFam" id="3.40.50.620:FF:000003">
    <property type="entry name" value="Leucine--tRNA ligase"/>
    <property type="match status" value="1"/>
</dbReference>
<dbReference type="FunFam" id="3.40.50.620:FF:000212">
    <property type="entry name" value="Leucine--tRNA ligase"/>
    <property type="match status" value="1"/>
</dbReference>
<dbReference type="Gene3D" id="3.10.20.590">
    <property type="match status" value="1"/>
</dbReference>
<dbReference type="Gene3D" id="3.40.50.620">
    <property type="entry name" value="HUPs"/>
    <property type="match status" value="2"/>
</dbReference>
<dbReference type="Gene3D" id="1.10.730.10">
    <property type="entry name" value="Isoleucyl-tRNA Synthetase, Domain 1"/>
    <property type="match status" value="1"/>
</dbReference>
<dbReference type="HAMAP" id="MF_00049_B">
    <property type="entry name" value="Leu_tRNA_synth_B"/>
    <property type="match status" value="1"/>
</dbReference>
<dbReference type="InterPro" id="IPR001412">
    <property type="entry name" value="aa-tRNA-synth_I_CS"/>
</dbReference>
<dbReference type="InterPro" id="IPR002300">
    <property type="entry name" value="aa-tRNA-synth_Ia"/>
</dbReference>
<dbReference type="InterPro" id="IPR002302">
    <property type="entry name" value="Leu-tRNA-ligase"/>
</dbReference>
<dbReference type="InterPro" id="IPR025709">
    <property type="entry name" value="Leu_tRNA-synth_edit"/>
</dbReference>
<dbReference type="InterPro" id="IPR015413">
    <property type="entry name" value="Methionyl/Leucyl_tRNA_Synth"/>
</dbReference>
<dbReference type="InterPro" id="IPR014729">
    <property type="entry name" value="Rossmann-like_a/b/a_fold"/>
</dbReference>
<dbReference type="InterPro" id="IPR009080">
    <property type="entry name" value="tRNAsynth_Ia_anticodon-bd"/>
</dbReference>
<dbReference type="InterPro" id="IPR009008">
    <property type="entry name" value="Val/Leu/Ile-tRNA-synth_edit"/>
</dbReference>
<dbReference type="NCBIfam" id="TIGR00396">
    <property type="entry name" value="leuS_bact"/>
    <property type="match status" value="1"/>
</dbReference>
<dbReference type="PANTHER" id="PTHR43740:SF2">
    <property type="entry name" value="LEUCINE--TRNA LIGASE, MITOCHONDRIAL"/>
    <property type="match status" value="1"/>
</dbReference>
<dbReference type="PANTHER" id="PTHR43740">
    <property type="entry name" value="LEUCYL-TRNA SYNTHETASE"/>
    <property type="match status" value="1"/>
</dbReference>
<dbReference type="Pfam" id="PF00133">
    <property type="entry name" value="tRNA-synt_1"/>
    <property type="match status" value="1"/>
</dbReference>
<dbReference type="Pfam" id="PF13603">
    <property type="entry name" value="tRNA-synt_1_2"/>
    <property type="match status" value="1"/>
</dbReference>
<dbReference type="Pfam" id="PF09334">
    <property type="entry name" value="tRNA-synt_1g"/>
    <property type="match status" value="1"/>
</dbReference>
<dbReference type="PRINTS" id="PR00985">
    <property type="entry name" value="TRNASYNTHLEU"/>
</dbReference>
<dbReference type="SUPFAM" id="SSF47323">
    <property type="entry name" value="Anticodon-binding domain of a subclass of class I aminoacyl-tRNA synthetases"/>
    <property type="match status" value="1"/>
</dbReference>
<dbReference type="SUPFAM" id="SSF52374">
    <property type="entry name" value="Nucleotidylyl transferase"/>
    <property type="match status" value="1"/>
</dbReference>
<dbReference type="SUPFAM" id="SSF50677">
    <property type="entry name" value="ValRS/IleRS/LeuRS editing domain"/>
    <property type="match status" value="1"/>
</dbReference>
<dbReference type="PROSITE" id="PS00178">
    <property type="entry name" value="AA_TRNA_LIGASE_I"/>
    <property type="match status" value="1"/>
</dbReference>
<name>SYL_NITSB</name>
<comment type="catalytic activity">
    <reaction evidence="1">
        <text>tRNA(Leu) + L-leucine + ATP = L-leucyl-tRNA(Leu) + AMP + diphosphate</text>
        <dbReference type="Rhea" id="RHEA:11688"/>
        <dbReference type="Rhea" id="RHEA-COMP:9613"/>
        <dbReference type="Rhea" id="RHEA-COMP:9622"/>
        <dbReference type="ChEBI" id="CHEBI:30616"/>
        <dbReference type="ChEBI" id="CHEBI:33019"/>
        <dbReference type="ChEBI" id="CHEBI:57427"/>
        <dbReference type="ChEBI" id="CHEBI:78442"/>
        <dbReference type="ChEBI" id="CHEBI:78494"/>
        <dbReference type="ChEBI" id="CHEBI:456215"/>
        <dbReference type="EC" id="6.1.1.4"/>
    </reaction>
</comment>
<comment type="subcellular location">
    <subcellularLocation>
        <location evidence="1">Cytoplasm</location>
    </subcellularLocation>
</comment>
<comment type="similarity">
    <text evidence="1">Belongs to the class-I aminoacyl-tRNA synthetase family.</text>
</comment>
<sequence length="815" mass="94146">MQYDPKAIEQKWQNEWKEKNAFEPQENYSKEKMYVLSMFPYPSGRIHMGHVRNYTIGDAIARYYRKTGANVLHPIGWDAFGMPAENAAIKHKVHPKKWTYENIDYMRKELDALGLSFSHDREFATCDPLYSKWEQSFIIDMWNRGLLYRKKAAVNWCPHDKTVLANEQVIEGRCWRCDTEVVQKEIEQYFLKITDYAQELLEDLKKLEGNWPNQVIAMQRNWIGRSEGLEFRLHFDETSAKKAGIDGFEVFTTRPDTIYGVTYTALAPEHPVVKHLIETKQLSDEAVQKICTMQNQNARTRQQAEKEGLFLDLYVIHPLTKQKIPVWVANFVLAEYGSGAVMAVPAHDERDFEFAHKYNLPIKYIIKPKEGELDTTKAYTEPGILFDSGEFSGFESSEAKQKIIEYFEENGIGKRSVNYKLKDWLVSRQRYWGTPIPLIKCPKCGIVPEKKENLPVTLPEDVEITGEGNPLELHPTWKKTTCPKCGGEAERETDTLDTFVESSWYFLRYTTPRKYWEEVPFRKEDTDYWMPVDQYIGGIEHAILHLLYARFFTKVLRDLGYVNLDEPFKRLLTQGMVLKDGAKMSKSKGNTVDPDEIVAKFGADTARLFILFAAPPAKELEWSDSAVEGAYRFIKRFFERSQNAYKTKSLPKIDQKSLSKEEKEARKKVYEALQKSTDVYTKSFSFNTLIAASMEALNALNGQNNPDIWTEGYWVLTNILEPIIPHTCWEISHNLFERNNFTRLQLDPAALEEDSVTLAVTVNGKRRAEIEVPKDASKEEILAKAKEIAKKWIDGKTIVKEIVVPGRLVNIVVKG</sequence>
<feature type="chain" id="PRO_1000009382" description="Leucine--tRNA ligase">
    <location>
        <begin position="1"/>
        <end position="815"/>
    </location>
</feature>
<feature type="short sequence motif" description="'HIGH' region">
    <location>
        <begin position="40"/>
        <end position="50"/>
    </location>
</feature>
<feature type="short sequence motif" description="'KMSKS' region">
    <location>
        <begin position="583"/>
        <end position="587"/>
    </location>
</feature>
<feature type="binding site" evidence="1">
    <location>
        <position position="586"/>
    </location>
    <ligand>
        <name>ATP</name>
        <dbReference type="ChEBI" id="CHEBI:30616"/>
    </ligand>
</feature>
<organism>
    <name type="scientific">Nitratiruptor sp. (strain SB155-2)</name>
    <dbReference type="NCBI Taxonomy" id="387092"/>
    <lineage>
        <taxon>Bacteria</taxon>
        <taxon>Pseudomonadati</taxon>
        <taxon>Campylobacterota</taxon>
        <taxon>Epsilonproteobacteria</taxon>
        <taxon>Nautiliales</taxon>
        <taxon>Nitratiruptoraceae</taxon>
        <taxon>Nitratiruptor</taxon>
    </lineage>
</organism>
<keyword id="KW-0030">Aminoacyl-tRNA synthetase</keyword>
<keyword id="KW-0067">ATP-binding</keyword>
<keyword id="KW-0963">Cytoplasm</keyword>
<keyword id="KW-0436">Ligase</keyword>
<keyword id="KW-0547">Nucleotide-binding</keyword>
<keyword id="KW-0648">Protein biosynthesis</keyword>
<keyword id="KW-1185">Reference proteome</keyword>
<reference key="1">
    <citation type="journal article" date="2007" name="Proc. Natl. Acad. Sci. U.S.A.">
        <title>Deep-sea vent epsilon-proteobacterial genomes provide insights into emergence of pathogens.</title>
        <authorList>
            <person name="Nakagawa S."/>
            <person name="Takaki Y."/>
            <person name="Shimamura S."/>
            <person name="Reysenbach A.-L."/>
            <person name="Takai K."/>
            <person name="Horikoshi K."/>
        </authorList>
    </citation>
    <scope>NUCLEOTIDE SEQUENCE [LARGE SCALE GENOMIC DNA]</scope>
    <source>
        <strain>SB155-2</strain>
    </source>
</reference>